<proteinExistence type="inferred from homology"/>
<feature type="chain" id="PRO_1000214582" description="Large ribosomal subunit protein uL4">
    <location>
        <begin position="1"/>
        <end position="207"/>
    </location>
</feature>
<protein>
    <recommendedName>
        <fullName evidence="1">Large ribosomal subunit protein uL4</fullName>
    </recommendedName>
    <alternativeName>
        <fullName evidence="2">50S ribosomal protein L4</fullName>
    </alternativeName>
</protein>
<evidence type="ECO:0000255" key="1">
    <source>
        <dbReference type="HAMAP-Rule" id="MF_01328"/>
    </source>
</evidence>
<evidence type="ECO:0000305" key="2"/>
<reference key="1">
    <citation type="journal article" date="2009" name="PLoS ONE">
        <title>Genome sequence of the endosymbiont Rickettsia peacockii and comparison with virulent Rickettsia rickettsii: identification of virulence factors.</title>
        <authorList>
            <person name="Felsheim R.F."/>
            <person name="Kurtti T.J."/>
            <person name="Munderloh U.G."/>
        </authorList>
    </citation>
    <scope>NUCLEOTIDE SEQUENCE [LARGE SCALE GENOMIC DNA]</scope>
    <source>
        <strain>Rustic</strain>
    </source>
</reference>
<sequence length="207" mass="23003">MKTKILSLANEEVGEISLNEDIFAVEFIRDDIIKQVIDWQRAKAMSGNHKTKTVSEVLGTTKKPFKQKGTGNARQGSLRSVQMRGGGVAHGPRVRSHATKLPKKVRKLGLIHALSEKCAEGKLLVIDSLKLDKPKTSVLVNILNKFQGKSFFVIDGNEVDINFSLAAKNIYNTVIVPQIGANVYDIIRHEYVLLSQEAVSVLEERLR</sequence>
<comment type="function">
    <text evidence="1">One of the primary rRNA binding proteins, this protein initially binds near the 5'-end of the 23S rRNA. It is important during the early stages of 50S assembly. It makes multiple contacts with different domains of the 23S rRNA in the assembled 50S subunit and ribosome.</text>
</comment>
<comment type="function">
    <text evidence="1">Forms part of the polypeptide exit tunnel.</text>
</comment>
<comment type="subunit">
    <text evidence="1">Part of the 50S ribosomal subunit.</text>
</comment>
<comment type="similarity">
    <text evidence="1">Belongs to the universal ribosomal protein uL4 family.</text>
</comment>
<accession>C4K2H8</accession>
<gene>
    <name evidence="1" type="primary">rplD</name>
    <name type="ordered locus">RPR_06225</name>
</gene>
<dbReference type="EMBL" id="CP001227">
    <property type="protein sequence ID" value="ACR47775.1"/>
    <property type="molecule type" value="Genomic_DNA"/>
</dbReference>
<dbReference type="RefSeq" id="WP_012736946.1">
    <property type="nucleotide sequence ID" value="NC_012730.1"/>
</dbReference>
<dbReference type="SMR" id="C4K2H8"/>
<dbReference type="KEGG" id="rpk:RPR_06225"/>
<dbReference type="HOGENOM" id="CLU_041575_5_1_5"/>
<dbReference type="Proteomes" id="UP000005015">
    <property type="component" value="Chromosome"/>
</dbReference>
<dbReference type="GO" id="GO:1990904">
    <property type="term" value="C:ribonucleoprotein complex"/>
    <property type="evidence" value="ECO:0007669"/>
    <property type="project" value="UniProtKB-KW"/>
</dbReference>
<dbReference type="GO" id="GO:0005840">
    <property type="term" value="C:ribosome"/>
    <property type="evidence" value="ECO:0007669"/>
    <property type="project" value="UniProtKB-KW"/>
</dbReference>
<dbReference type="GO" id="GO:0019843">
    <property type="term" value="F:rRNA binding"/>
    <property type="evidence" value="ECO:0007669"/>
    <property type="project" value="UniProtKB-UniRule"/>
</dbReference>
<dbReference type="GO" id="GO:0003735">
    <property type="term" value="F:structural constituent of ribosome"/>
    <property type="evidence" value="ECO:0007669"/>
    <property type="project" value="InterPro"/>
</dbReference>
<dbReference type="GO" id="GO:0006412">
    <property type="term" value="P:translation"/>
    <property type="evidence" value="ECO:0007669"/>
    <property type="project" value="UniProtKB-UniRule"/>
</dbReference>
<dbReference type="FunFam" id="3.40.1370.10:FF:000015">
    <property type="entry name" value="50S ribosomal protein L4"/>
    <property type="match status" value="1"/>
</dbReference>
<dbReference type="Gene3D" id="3.40.1370.10">
    <property type="match status" value="1"/>
</dbReference>
<dbReference type="HAMAP" id="MF_01328_B">
    <property type="entry name" value="Ribosomal_uL4_B"/>
    <property type="match status" value="1"/>
</dbReference>
<dbReference type="InterPro" id="IPR002136">
    <property type="entry name" value="Ribosomal_uL4"/>
</dbReference>
<dbReference type="InterPro" id="IPR013005">
    <property type="entry name" value="Ribosomal_uL4-like"/>
</dbReference>
<dbReference type="InterPro" id="IPR023574">
    <property type="entry name" value="Ribosomal_uL4_dom_sf"/>
</dbReference>
<dbReference type="NCBIfam" id="TIGR03953">
    <property type="entry name" value="rplD_bact"/>
    <property type="match status" value="1"/>
</dbReference>
<dbReference type="PANTHER" id="PTHR10746">
    <property type="entry name" value="50S RIBOSOMAL PROTEIN L4"/>
    <property type="match status" value="1"/>
</dbReference>
<dbReference type="PANTHER" id="PTHR10746:SF6">
    <property type="entry name" value="LARGE RIBOSOMAL SUBUNIT PROTEIN UL4M"/>
    <property type="match status" value="1"/>
</dbReference>
<dbReference type="Pfam" id="PF00573">
    <property type="entry name" value="Ribosomal_L4"/>
    <property type="match status" value="1"/>
</dbReference>
<dbReference type="SUPFAM" id="SSF52166">
    <property type="entry name" value="Ribosomal protein L4"/>
    <property type="match status" value="1"/>
</dbReference>
<organism>
    <name type="scientific">Rickettsia peacockii (strain Rustic)</name>
    <dbReference type="NCBI Taxonomy" id="562019"/>
    <lineage>
        <taxon>Bacteria</taxon>
        <taxon>Pseudomonadati</taxon>
        <taxon>Pseudomonadota</taxon>
        <taxon>Alphaproteobacteria</taxon>
        <taxon>Rickettsiales</taxon>
        <taxon>Rickettsiaceae</taxon>
        <taxon>Rickettsieae</taxon>
        <taxon>Rickettsia</taxon>
        <taxon>spotted fever group</taxon>
    </lineage>
</organism>
<keyword id="KW-0687">Ribonucleoprotein</keyword>
<keyword id="KW-0689">Ribosomal protein</keyword>
<keyword id="KW-0694">RNA-binding</keyword>
<keyword id="KW-0699">rRNA-binding</keyword>
<name>RL4_RICPU</name>